<comment type="function">
    <text evidence="1">Required for small ribosomal subunit (SSU) synthesis. Has a role in the processing of early nucleolar and late cytoplasmic pre-RNA species (By similarity).</text>
</comment>
<comment type="subunit">
    <text evidence="1">Component of the small ribosomal subunit, ribosomal RNA processing complex (SSU RRP complex).</text>
</comment>
<comment type="subcellular location">
    <subcellularLocation>
        <location evidence="2">Cytoplasm</location>
    </subcellularLocation>
    <subcellularLocation>
        <location evidence="2">Nucleus</location>
        <location evidence="2">Nucleolus</location>
    </subcellularLocation>
</comment>
<comment type="similarity">
    <text evidence="3">Belongs to the PNO1 family.</text>
</comment>
<gene>
    <name type="primary">PNO1</name>
    <name type="ORF">FGRRES_01345</name>
    <name type="ORF">FGSG_01345</name>
</gene>
<organism>
    <name type="scientific">Gibberella zeae (strain ATCC MYA-4620 / CBS 123657 / FGSC 9075 / NRRL 31084 / PH-1)</name>
    <name type="common">Wheat head blight fungus</name>
    <name type="synonym">Fusarium graminearum</name>
    <dbReference type="NCBI Taxonomy" id="229533"/>
    <lineage>
        <taxon>Eukaryota</taxon>
        <taxon>Fungi</taxon>
        <taxon>Dikarya</taxon>
        <taxon>Ascomycota</taxon>
        <taxon>Pezizomycotina</taxon>
        <taxon>Sordariomycetes</taxon>
        <taxon>Hypocreomycetidae</taxon>
        <taxon>Hypocreales</taxon>
        <taxon>Nectriaceae</taxon>
        <taxon>Fusarium</taxon>
    </lineage>
</organism>
<dbReference type="EMBL" id="DS231663">
    <property type="protein sequence ID" value="ESU06650.1"/>
    <property type="molecule type" value="Genomic_DNA"/>
</dbReference>
<dbReference type="EMBL" id="HG970332">
    <property type="protein sequence ID" value="CEF73463.1"/>
    <property type="molecule type" value="Genomic_DNA"/>
</dbReference>
<dbReference type="RefSeq" id="XP_011317135.1">
    <property type="nucleotide sequence ID" value="XM_011318833.1"/>
</dbReference>
<dbReference type="SMR" id="Q4IN63"/>
<dbReference type="FunCoup" id="Q4IN63">
    <property type="interactions" value="924"/>
</dbReference>
<dbReference type="STRING" id="229533.Q4IN63"/>
<dbReference type="GeneID" id="23548788"/>
<dbReference type="KEGG" id="fgr:FGSG_01345"/>
<dbReference type="VEuPathDB" id="FungiDB:FGRAMPH1_01G03317"/>
<dbReference type="eggNOG" id="KOG3273">
    <property type="taxonomic scope" value="Eukaryota"/>
</dbReference>
<dbReference type="HOGENOM" id="CLU_064992_0_2_1"/>
<dbReference type="InParanoid" id="Q4IN63"/>
<dbReference type="OrthoDB" id="95247at110618"/>
<dbReference type="Proteomes" id="UP000070720">
    <property type="component" value="Chromosome 1"/>
</dbReference>
<dbReference type="GO" id="GO:0005737">
    <property type="term" value="C:cytoplasm"/>
    <property type="evidence" value="ECO:0007669"/>
    <property type="project" value="UniProtKB-SubCell"/>
</dbReference>
<dbReference type="GO" id="GO:0005730">
    <property type="term" value="C:nucleolus"/>
    <property type="evidence" value="ECO:0007669"/>
    <property type="project" value="UniProtKB-SubCell"/>
</dbReference>
<dbReference type="GO" id="GO:0003723">
    <property type="term" value="F:RNA binding"/>
    <property type="evidence" value="ECO:0007669"/>
    <property type="project" value="UniProtKB-KW"/>
</dbReference>
<dbReference type="GO" id="GO:0042254">
    <property type="term" value="P:ribosome biogenesis"/>
    <property type="evidence" value="ECO:0007669"/>
    <property type="project" value="UniProtKB-KW"/>
</dbReference>
<dbReference type="CDD" id="cd22391">
    <property type="entry name" value="KH-I_PNO1_rpt1"/>
    <property type="match status" value="1"/>
</dbReference>
<dbReference type="CDD" id="cd22392">
    <property type="entry name" value="KH-I_PNO1_rpt2"/>
    <property type="match status" value="1"/>
</dbReference>
<dbReference type="FunFam" id="3.30.1370.10:FF:000009">
    <property type="entry name" value="RNA-binding protein PNO1"/>
    <property type="match status" value="1"/>
</dbReference>
<dbReference type="Gene3D" id="3.30.1370.10">
    <property type="entry name" value="K Homology domain, type 1"/>
    <property type="match status" value="1"/>
</dbReference>
<dbReference type="InterPro" id="IPR055212">
    <property type="entry name" value="KH-I_PNO1_first"/>
</dbReference>
<dbReference type="InterPro" id="IPR004087">
    <property type="entry name" value="KH_dom"/>
</dbReference>
<dbReference type="InterPro" id="IPR036612">
    <property type="entry name" value="KH_dom_type_1_sf"/>
</dbReference>
<dbReference type="InterPro" id="IPR055211">
    <property type="entry name" value="KH_PNO1_2nd"/>
</dbReference>
<dbReference type="PANTHER" id="PTHR12826">
    <property type="entry name" value="RIBONUCLEASE Y"/>
    <property type="match status" value="1"/>
</dbReference>
<dbReference type="PANTHER" id="PTHR12826:SF13">
    <property type="entry name" value="RNA-BINDING PROTEIN PNO1"/>
    <property type="match status" value="1"/>
</dbReference>
<dbReference type="Pfam" id="PF22891">
    <property type="entry name" value="KH_PNO1_2nd"/>
    <property type="match status" value="1"/>
</dbReference>
<dbReference type="SMART" id="SM00322">
    <property type="entry name" value="KH"/>
    <property type="match status" value="1"/>
</dbReference>
<dbReference type="SUPFAM" id="SSF54791">
    <property type="entry name" value="Eukaryotic type KH-domain (KH-domain type I)"/>
    <property type="match status" value="1"/>
</dbReference>
<name>PNO1_GIBZE</name>
<feature type="chain" id="PRO_0000278371" description="Pre-rRNA-processing protein PNO1">
    <location>
        <begin position="1"/>
        <end position="255"/>
    </location>
</feature>
<feature type="domain" description="KH">
    <location>
        <begin position="179"/>
        <end position="228"/>
    </location>
</feature>
<reference key="1">
    <citation type="journal article" date="2007" name="Science">
        <title>The Fusarium graminearum genome reveals a link between localized polymorphism and pathogen specialization.</title>
        <authorList>
            <person name="Cuomo C.A."/>
            <person name="Gueldener U."/>
            <person name="Xu J.-R."/>
            <person name="Trail F."/>
            <person name="Turgeon B.G."/>
            <person name="Di Pietro A."/>
            <person name="Walton J.D."/>
            <person name="Ma L.-J."/>
            <person name="Baker S.E."/>
            <person name="Rep M."/>
            <person name="Adam G."/>
            <person name="Antoniw J."/>
            <person name="Baldwin T."/>
            <person name="Calvo S.E."/>
            <person name="Chang Y.-L."/>
            <person name="DeCaprio D."/>
            <person name="Gale L.R."/>
            <person name="Gnerre S."/>
            <person name="Goswami R.S."/>
            <person name="Hammond-Kosack K."/>
            <person name="Harris L.J."/>
            <person name="Hilburn K."/>
            <person name="Kennell J.C."/>
            <person name="Kroken S."/>
            <person name="Magnuson J.K."/>
            <person name="Mannhaupt G."/>
            <person name="Mauceli E.W."/>
            <person name="Mewes H.-W."/>
            <person name="Mitterbauer R."/>
            <person name="Muehlbauer G."/>
            <person name="Muensterkoetter M."/>
            <person name="Nelson D."/>
            <person name="O'Donnell K."/>
            <person name="Ouellet T."/>
            <person name="Qi W."/>
            <person name="Quesneville H."/>
            <person name="Roncero M.I.G."/>
            <person name="Seong K.-Y."/>
            <person name="Tetko I.V."/>
            <person name="Urban M."/>
            <person name="Waalwijk C."/>
            <person name="Ward T.J."/>
            <person name="Yao J."/>
            <person name="Birren B.W."/>
            <person name="Kistler H.C."/>
        </authorList>
    </citation>
    <scope>NUCLEOTIDE SEQUENCE [LARGE SCALE GENOMIC DNA]</scope>
    <source>
        <strain>ATCC MYA-4620 / CBS 123657 / FGSC 9075 / NRRL 31084 / PH-1</strain>
    </source>
</reference>
<reference key="2">
    <citation type="journal article" date="2010" name="Nature">
        <title>Comparative genomics reveals mobile pathogenicity chromosomes in Fusarium.</title>
        <authorList>
            <person name="Ma L.-J."/>
            <person name="van der Does H.C."/>
            <person name="Borkovich K.A."/>
            <person name="Coleman J.J."/>
            <person name="Daboussi M.-J."/>
            <person name="Di Pietro A."/>
            <person name="Dufresne M."/>
            <person name="Freitag M."/>
            <person name="Grabherr M."/>
            <person name="Henrissat B."/>
            <person name="Houterman P.M."/>
            <person name="Kang S."/>
            <person name="Shim W.-B."/>
            <person name="Woloshuk C."/>
            <person name="Xie X."/>
            <person name="Xu J.-R."/>
            <person name="Antoniw J."/>
            <person name="Baker S.E."/>
            <person name="Bluhm B.H."/>
            <person name="Breakspear A."/>
            <person name="Brown D.W."/>
            <person name="Butchko R.A.E."/>
            <person name="Chapman S."/>
            <person name="Coulson R."/>
            <person name="Coutinho P.M."/>
            <person name="Danchin E.G.J."/>
            <person name="Diener A."/>
            <person name="Gale L.R."/>
            <person name="Gardiner D.M."/>
            <person name="Goff S."/>
            <person name="Hammond-Kosack K.E."/>
            <person name="Hilburn K."/>
            <person name="Hua-Van A."/>
            <person name="Jonkers W."/>
            <person name="Kazan K."/>
            <person name="Kodira C.D."/>
            <person name="Koehrsen M."/>
            <person name="Kumar L."/>
            <person name="Lee Y.-H."/>
            <person name="Li L."/>
            <person name="Manners J.M."/>
            <person name="Miranda-Saavedra D."/>
            <person name="Mukherjee M."/>
            <person name="Park G."/>
            <person name="Park J."/>
            <person name="Park S.-Y."/>
            <person name="Proctor R.H."/>
            <person name="Regev A."/>
            <person name="Ruiz-Roldan M.C."/>
            <person name="Sain D."/>
            <person name="Sakthikumar S."/>
            <person name="Sykes S."/>
            <person name="Schwartz D.C."/>
            <person name="Turgeon B.G."/>
            <person name="Wapinski I."/>
            <person name="Yoder O."/>
            <person name="Young S."/>
            <person name="Zeng Q."/>
            <person name="Zhou S."/>
            <person name="Galagan J."/>
            <person name="Cuomo C.A."/>
            <person name="Kistler H.C."/>
            <person name="Rep M."/>
        </authorList>
    </citation>
    <scope>GENOME REANNOTATION</scope>
    <source>
        <strain>ATCC MYA-4620 / CBS 123657 / FGSC 9075 / NRRL 31084 / PH-1</strain>
    </source>
</reference>
<reference key="3">
    <citation type="journal article" date="2015" name="BMC Genomics">
        <title>The completed genome sequence of the pathogenic ascomycete fungus Fusarium graminearum.</title>
        <authorList>
            <person name="King R."/>
            <person name="Urban M."/>
            <person name="Hammond-Kosack M.C.U."/>
            <person name="Hassani-Pak K."/>
            <person name="Hammond-Kosack K.E."/>
        </authorList>
    </citation>
    <scope>NUCLEOTIDE SEQUENCE [LARGE SCALE GENOMIC DNA]</scope>
    <source>
        <strain>ATCC MYA-4620 / CBS 123657 / FGSC 9075 / NRRL 31084 / PH-1</strain>
    </source>
</reference>
<accession>Q4IN63</accession>
<accession>A0A0E0RQD8</accession>
<accession>V6R455</accession>
<protein>
    <recommendedName>
        <fullName>Pre-rRNA-processing protein PNO1</fullName>
    </recommendedName>
</protein>
<proteinExistence type="inferred from homology"/>
<sequence length="255" mass="28241">MPAPTALKQAESAPLANDISLPVEGADEEFLLDAPGAEDADANVLVPVEDSNDMQIDEEGRPRFAPARDIDPVTRVETRKIPIPPHRMTPLKQSWTSIYPPLVEHLKLQCRMNIKRKTVELRSSKHTTESGALQKGEDFVKAFTLGFDVDDAIALLRLDDLYIQSFEIKDVRTMHGDSQARAIGRIAGKDGKTKFAIENASRTRIVLADSKIHILGGFKNIHLARESVVSLILGKPPGKVYGNLRTVAARMKERF</sequence>
<keyword id="KW-0963">Cytoplasm</keyword>
<keyword id="KW-0539">Nucleus</keyword>
<keyword id="KW-1185">Reference proteome</keyword>
<keyword id="KW-0690">Ribosome biogenesis</keyword>
<keyword id="KW-0694">RNA-binding</keyword>
<evidence type="ECO:0000250" key="1"/>
<evidence type="ECO:0000250" key="2">
    <source>
        <dbReference type="UniProtKB" id="Q99216"/>
    </source>
</evidence>
<evidence type="ECO:0000305" key="3"/>